<accession>Q65UI1</accession>
<comment type="function">
    <text evidence="1">Catalyzes the synthesis of GMP from XMP.</text>
</comment>
<comment type="catalytic activity">
    <reaction evidence="1">
        <text>XMP + L-glutamine + ATP + H2O = GMP + L-glutamate + AMP + diphosphate + 2 H(+)</text>
        <dbReference type="Rhea" id="RHEA:11680"/>
        <dbReference type="ChEBI" id="CHEBI:15377"/>
        <dbReference type="ChEBI" id="CHEBI:15378"/>
        <dbReference type="ChEBI" id="CHEBI:29985"/>
        <dbReference type="ChEBI" id="CHEBI:30616"/>
        <dbReference type="ChEBI" id="CHEBI:33019"/>
        <dbReference type="ChEBI" id="CHEBI:57464"/>
        <dbReference type="ChEBI" id="CHEBI:58115"/>
        <dbReference type="ChEBI" id="CHEBI:58359"/>
        <dbReference type="ChEBI" id="CHEBI:456215"/>
        <dbReference type="EC" id="6.3.5.2"/>
    </reaction>
</comment>
<comment type="pathway">
    <text evidence="1">Purine metabolism; GMP biosynthesis; GMP from XMP (L-Gln route): step 1/1.</text>
</comment>
<comment type="subunit">
    <text evidence="1">Homodimer.</text>
</comment>
<name>GUAA_MANSM</name>
<organism>
    <name type="scientific">Mannheimia succiniciproducens (strain KCTC 0769BP / MBEL55E)</name>
    <dbReference type="NCBI Taxonomy" id="221988"/>
    <lineage>
        <taxon>Bacteria</taxon>
        <taxon>Pseudomonadati</taxon>
        <taxon>Pseudomonadota</taxon>
        <taxon>Gammaproteobacteria</taxon>
        <taxon>Pasteurellales</taxon>
        <taxon>Pasteurellaceae</taxon>
        <taxon>Basfia</taxon>
    </lineage>
</organism>
<proteinExistence type="inferred from homology"/>
<keyword id="KW-0067">ATP-binding</keyword>
<keyword id="KW-0315">Glutamine amidotransferase</keyword>
<keyword id="KW-0332">GMP biosynthesis</keyword>
<keyword id="KW-0436">Ligase</keyword>
<keyword id="KW-0547">Nucleotide-binding</keyword>
<keyword id="KW-0658">Purine biosynthesis</keyword>
<evidence type="ECO:0000255" key="1">
    <source>
        <dbReference type="HAMAP-Rule" id="MF_00344"/>
    </source>
</evidence>
<gene>
    <name evidence="1" type="primary">guaA</name>
    <name type="ordered locus">MS0772</name>
</gene>
<protein>
    <recommendedName>
        <fullName evidence="1">GMP synthase [glutamine-hydrolyzing]</fullName>
        <ecNumber evidence="1">6.3.5.2</ecNumber>
    </recommendedName>
    <alternativeName>
        <fullName evidence="1">GMP synthetase</fullName>
    </alternativeName>
    <alternativeName>
        <fullName evidence="1">Glutamine amidotransferase</fullName>
    </alternativeName>
</protein>
<feature type="chain" id="PRO_0000229441" description="GMP synthase [glutamine-hydrolyzing]">
    <location>
        <begin position="1"/>
        <end position="523"/>
    </location>
</feature>
<feature type="domain" description="Glutamine amidotransferase type-1" evidence="1">
    <location>
        <begin position="8"/>
        <end position="205"/>
    </location>
</feature>
<feature type="domain" description="GMPS ATP-PPase" evidence="1">
    <location>
        <begin position="206"/>
        <end position="398"/>
    </location>
</feature>
<feature type="active site" description="Nucleophile" evidence="1">
    <location>
        <position position="85"/>
    </location>
</feature>
<feature type="active site" evidence="1">
    <location>
        <position position="179"/>
    </location>
</feature>
<feature type="active site" evidence="1">
    <location>
        <position position="181"/>
    </location>
</feature>
<feature type="binding site" evidence="1">
    <location>
        <begin position="233"/>
        <end position="239"/>
    </location>
    <ligand>
        <name>ATP</name>
        <dbReference type="ChEBI" id="CHEBI:30616"/>
    </ligand>
</feature>
<dbReference type="EC" id="6.3.5.2" evidence="1"/>
<dbReference type="EMBL" id="AE016827">
    <property type="protein sequence ID" value="AAU37379.1"/>
    <property type="molecule type" value="Genomic_DNA"/>
</dbReference>
<dbReference type="RefSeq" id="WP_011199951.1">
    <property type="nucleotide sequence ID" value="NC_006300.1"/>
</dbReference>
<dbReference type="SMR" id="Q65UI1"/>
<dbReference type="STRING" id="221988.MS0772"/>
<dbReference type="MEROPS" id="C26.957"/>
<dbReference type="KEGG" id="msu:MS0772"/>
<dbReference type="eggNOG" id="COG0518">
    <property type="taxonomic scope" value="Bacteria"/>
</dbReference>
<dbReference type="eggNOG" id="COG0519">
    <property type="taxonomic scope" value="Bacteria"/>
</dbReference>
<dbReference type="HOGENOM" id="CLU_014340_0_5_6"/>
<dbReference type="OrthoDB" id="9802219at2"/>
<dbReference type="UniPathway" id="UPA00189">
    <property type="reaction ID" value="UER00296"/>
</dbReference>
<dbReference type="Proteomes" id="UP000000607">
    <property type="component" value="Chromosome"/>
</dbReference>
<dbReference type="GO" id="GO:0005829">
    <property type="term" value="C:cytosol"/>
    <property type="evidence" value="ECO:0007669"/>
    <property type="project" value="TreeGrafter"/>
</dbReference>
<dbReference type="GO" id="GO:0005524">
    <property type="term" value="F:ATP binding"/>
    <property type="evidence" value="ECO:0007669"/>
    <property type="project" value="UniProtKB-UniRule"/>
</dbReference>
<dbReference type="GO" id="GO:0003921">
    <property type="term" value="F:GMP synthase activity"/>
    <property type="evidence" value="ECO:0007669"/>
    <property type="project" value="InterPro"/>
</dbReference>
<dbReference type="CDD" id="cd01742">
    <property type="entry name" value="GATase1_GMP_Synthase"/>
    <property type="match status" value="1"/>
</dbReference>
<dbReference type="CDD" id="cd01997">
    <property type="entry name" value="GMP_synthase_C"/>
    <property type="match status" value="1"/>
</dbReference>
<dbReference type="FunFam" id="3.30.300.10:FF:000002">
    <property type="entry name" value="GMP synthase [glutamine-hydrolyzing]"/>
    <property type="match status" value="1"/>
</dbReference>
<dbReference type="FunFam" id="3.40.50.620:FF:000001">
    <property type="entry name" value="GMP synthase [glutamine-hydrolyzing]"/>
    <property type="match status" value="1"/>
</dbReference>
<dbReference type="FunFam" id="3.40.50.880:FF:000001">
    <property type="entry name" value="GMP synthase [glutamine-hydrolyzing]"/>
    <property type="match status" value="1"/>
</dbReference>
<dbReference type="Gene3D" id="3.30.300.10">
    <property type="match status" value="1"/>
</dbReference>
<dbReference type="Gene3D" id="3.40.50.880">
    <property type="match status" value="1"/>
</dbReference>
<dbReference type="Gene3D" id="3.40.50.620">
    <property type="entry name" value="HUPs"/>
    <property type="match status" value="1"/>
</dbReference>
<dbReference type="HAMAP" id="MF_00344">
    <property type="entry name" value="GMP_synthase"/>
    <property type="match status" value="1"/>
</dbReference>
<dbReference type="InterPro" id="IPR029062">
    <property type="entry name" value="Class_I_gatase-like"/>
</dbReference>
<dbReference type="InterPro" id="IPR017926">
    <property type="entry name" value="GATASE"/>
</dbReference>
<dbReference type="InterPro" id="IPR001674">
    <property type="entry name" value="GMP_synth_C"/>
</dbReference>
<dbReference type="InterPro" id="IPR004739">
    <property type="entry name" value="GMP_synth_GATase"/>
</dbReference>
<dbReference type="InterPro" id="IPR022955">
    <property type="entry name" value="GMP_synthase"/>
</dbReference>
<dbReference type="InterPro" id="IPR025777">
    <property type="entry name" value="GMPS_ATP_PPase_dom"/>
</dbReference>
<dbReference type="InterPro" id="IPR022310">
    <property type="entry name" value="NAD/GMP_synthase"/>
</dbReference>
<dbReference type="InterPro" id="IPR014729">
    <property type="entry name" value="Rossmann-like_a/b/a_fold"/>
</dbReference>
<dbReference type="NCBIfam" id="TIGR00884">
    <property type="entry name" value="guaA_Cterm"/>
    <property type="match status" value="1"/>
</dbReference>
<dbReference type="NCBIfam" id="TIGR00888">
    <property type="entry name" value="guaA_Nterm"/>
    <property type="match status" value="1"/>
</dbReference>
<dbReference type="NCBIfam" id="NF000848">
    <property type="entry name" value="PRK00074.1"/>
    <property type="match status" value="1"/>
</dbReference>
<dbReference type="PANTHER" id="PTHR11922:SF2">
    <property type="entry name" value="GMP SYNTHASE [GLUTAMINE-HYDROLYZING]"/>
    <property type="match status" value="1"/>
</dbReference>
<dbReference type="PANTHER" id="PTHR11922">
    <property type="entry name" value="GMP SYNTHASE-RELATED"/>
    <property type="match status" value="1"/>
</dbReference>
<dbReference type="Pfam" id="PF00117">
    <property type="entry name" value="GATase"/>
    <property type="match status" value="1"/>
</dbReference>
<dbReference type="Pfam" id="PF00958">
    <property type="entry name" value="GMP_synt_C"/>
    <property type="match status" value="1"/>
</dbReference>
<dbReference type="Pfam" id="PF02540">
    <property type="entry name" value="NAD_synthase"/>
    <property type="match status" value="1"/>
</dbReference>
<dbReference type="PRINTS" id="PR00097">
    <property type="entry name" value="ANTSNTHASEII"/>
</dbReference>
<dbReference type="PRINTS" id="PR00099">
    <property type="entry name" value="CPSGATASE"/>
</dbReference>
<dbReference type="PRINTS" id="PR00096">
    <property type="entry name" value="GATASE"/>
</dbReference>
<dbReference type="SUPFAM" id="SSF52402">
    <property type="entry name" value="Adenine nucleotide alpha hydrolases-like"/>
    <property type="match status" value="1"/>
</dbReference>
<dbReference type="SUPFAM" id="SSF52317">
    <property type="entry name" value="Class I glutamine amidotransferase-like"/>
    <property type="match status" value="1"/>
</dbReference>
<dbReference type="SUPFAM" id="SSF54810">
    <property type="entry name" value="GMP synthetase C-terminal dimerisation domain"/>
    <property type="match status" value="1"/>
</dbReference>
<dbReference type="PROSITE" id="PS51273">
    <property type="entry name" value="GATASE_TYPE_1"/>
    <property type="match status" value="1"/>
</dbReference>
<dbReference type="PROSITE" id="PS51553">
    <property type="entry name" value="GMPS_ATP_PPASE"/>
    <property type="match status" value="1"/>
</dbReference>
<reference key="1">
    <citation type="journal article" date="2004" name="Nat. Biotechnol.">
        <title>The genome sequence of the capnophilic rumen bacterium Mannheimia succiniciproducens.</title>
        <authorList>
            <person name="Hong S.H."/>
            <person name="Kim J.S."/>
            <person name="Lee S.Y."/>
            <person name="In Y.H."/>
            <person name="Choi S.S."/>
            <person name="Rih J.-K."/>
            <person name="Kim C.H."/>
            <person name="Jeong H."/>
            <person name="Hur C.G."/>
            <person name="Kim J.J."/>
        </authorList>
    </citation>
    <scope>NUCLEOTIDE SEQUENCE [LARGE SCALE GENOMIC DNA]</scope>
    <source>
        <strain>KCTC 0769BP / MBEL55E</strain>
    </source>
</reference>
<sequence length="523" mass="58085">MNNIHNHKILILDFGSQYTQLIARRVREIGVYCELWAWDVTEQQIREFNPTGIILSGGPESTTEDNSPRAPEYVFNAGVPVLGICYGMQTMAMQLGGLTEPSSHREFGYASVSLENSTALFAQLNDDLNSSLPKLDVWMSHGDKVTRLPEGFQLTGTTSTCPIAAMSDESRHFYGVQFHPEVTHTKSGLALLTNFVVNICGCTTNWTPENIIEDAVARIKAQVGDDEVILGLSGGVDSSVTALLLHRAIGKNLHCVFVDNGLLRLNEGDQVMEMFGDKFGLNIIRVNAEDRFLDALKGIDEPESKRKMIGKVFVDVFDEESHKQTSVKWLAQGTIYPDVIESAASKTGKAHVIKSHHNVGGLPDYMKLGLVEPLRELFKDEVRKIGLALGLPAEMLNRHPFPGPGLGVRVLGEIKKEYCDLLRKADAIFIEELYNSGWYYKVSQAFTVFLPVKSVGVMGDGRKYDWVVSLRAVETIDFMTAHWAHLPYDLLGKISNRIINEVDGISRVVYDVSGKPPATIEWE</sequence>